<dbReference type="EC" id="2.7.4.22" evidence="1"/>
<dbReference type="EMBL" id="CP000745">
    <property type="protein sequence ID" value="ABR66446.1"/>
    <property type="molecule type" value="Genomic_DNA"/>
</dbReference>
<dbReference type="SMR" id="A6VJ20"/>
<dbReference type="STRING" id="426368.MmarC7_1383"/>
<dbReference type="KEGG" id="mmz:MmarC7_1383"/>
<dbReference type="eggNOG" id="arCOG00858">
    <property type="taxonomic scope" value="Archaea"/>
</dbReference>
<dbReference type="HOGENOM" id="CLU_079546_0_0_2"/>
<dbReference type="OrthoDB" id="372251at2157"/>
<dbReference type="UniPathway" id="UPA00159">
    <property type="reaction ID" value="UER00275"/>
</dbReference>
<dbReference type="GO" id="GO:0005737">
    <property type="term" value="C:cytoplasm"/>
    <property type="evidence" value="ECO:0007669"/>
    <property type="project" value="UniProtKB-SubCell"/>
</dbReference>
<dbReference type="GO" id="GO:0005524">
    <property type="term" value="F:ATP binding"/>
    <property type="evidence" value="ECO:0007669"/>
    <property type="project" value="UniProtKB-KW"/>
</dbReference>
<dbReference type="GO" id="GO:0033862">
    <property type="term" value="F:UMP kinase activity"/>
    <property type="evidence" value="ECO:0007669"/>
    <property type="project" value="UniProtKB-EC"/>
</dbReference>
<dbReference type="GO" id="GO:0044210">
    <property type="term" value="P:'de novo' CTP biosynthetic process"/>
    <property type="evidence" value="ECO:0007669"/>
    <property type="project" value="UniProtKB-UniRule"/>
</dbReference>
<dbReference type="GO" id="GO:0006225">
    <property type="term" value="P:UDP biosynthetic process"/>
    <property type="evidence" value="ECO:0007669"/>
    <property type="project" value="TreeGrafter"/>
</dbReference>
<dbReference type="CDD" id="cd04253">
    <property type="entry name" value="AAK_UMPK-PyrH-Pf"/>
    <property type="match status" value="1"/>
</dbReference>
<dbReference type="Gene3D" id="3.40.1160.10">
    <property type="entry name" value="Acetylglutamate kinase-like"/>
    <property type="match status" value="1"/>
</dbReference>
<dbReference type="HAMAP" id="MF_01220_A">
    <property type="entry name" value="PyrH_A"/>
    <property type="match status" value="1"/>
</dbReference>
<dbReference type="InterPro" id="IPR036393">
    <property type="entry name" value="AceGlu_kinase-like_sf"/>
</dbReference>
<dbReference type="InterPro" id="IPR001048">
    <property type="entry name" value="Asp/Glu/Uridylate_kinase"/>
</dbReference>
<dbReference type="InterPro" id="IPR011817">
    <property type="entry name" value="Uridylate_kinase"/>
</dbReference>
<dbReference type="InterPro" id="IPR011818">
    <property type="entry name" value="Uridylate_kinase_arch/spir"/>
</dbReference>
<dbReference type="NCBIfam" id="TIGR02076">
    <property type="entry name" value="pyrH_arch"/>
    <property type="match status" value="1"/>
</dbReference>
<dbReference type="PANTHER" id="PTHR42833">
    <property type="entry name" value="URIDYLATE KINASE"/>
    <property type="match status" value="1"/>
</dbReference>
<dbReference type="PANTHER" id="PTHR42833:SF4">
    <property type="entry name" value="URIDYLATE KINASE PUMPKIN, CHLOROPLASTIC"/>
    <property type="match status" value="1"/>
</dbReference>
<dbReference type="Pfam" id="PF00696">
    <property type="entry name" value="AA_kinase"/>
    <property type="match status" value="1"/>
</dbReference>
<dbReference type="PIRSF" id="PIRSF005650">
    <property type="entry name" value="Uridylate_kin"/>
    <property type="match status" value="1"/>
</dbReference>
<dbReference type="SUPFAM" id="SSF53633">
    <property type="entry name" value="Carbamate kinase-like"/>
    <property type="match status" value="1"/>
</dbReference>
<sequence length="225" mass="23992">MDVVFALGGSVLMPKEGASTENIQNYAQAFKKLKEMGHRVSVVVGGGNTARQYISVAREFTNESFCDEIGILATRMNSMLLISALGKDAVKQVPENFKDAELILNMDKILVMGGTHPAHTTDAVSATLAEFIDADLLVIATNVDGVYTKDPRCNEDAVKLDKINTKELLEITGSNSMSAGSSGVVDPLASKIIDRAKLKTIVIKGIPEEILASISGNHNGTTITP</sequence>
<name>PYRH_METM7</name>
<protein>
    <recommendedName>
        <fullName evidence="1">Uridylate kinase</fullName>
        <shortName evidence="1">UK</shortName>
        <ecNumber evidence="1">2.7.4.22</ecNumber>
    </recommendedName>
    <alternativeName>
        <fullName evidence="1">Uridine monophosphate kinase</fullName>
        <shortName evidence="1">UMP kinase</shortName>
        <shortName evidence="1">UMPK</shortName>
    </alternativeName>
</protein>
<keyword id="KW-0067">ATP-binding</keyword>
<keyword id="KW-0963">Cytoplasm</keyword>
<keyword id="KW-0418">Kinase</keyword>
<keyword id="KW-0547">Nucleotide-binding</keyword>
<keyword id="KW-0665">Pyrimidine biosynthesis</keyword>
<keyword id="KW-0808">Transferase</keyword>
<organism>
    <name type="scientific">Methanococcus maripaludis (strain C7 / ATCC BAA-1331)</name>
    <dbReference type="NCBI Taxonomy" id="426368"/>
    <lineage>
        <taxon>Archaea</taxon>
        <taxon>Methanobacteriati</taxon>
        <taxon>Methanobacteriota</taxon>
        <taxon>Methanomada group</taxon>
        <taxon>Methanococci</taxon>
        <taxon>Methanococcales</taxon>
        <taxon>Methanococcaceae</taxon>
        <taxon>Methanococcus</taxon>
    </lineage>
</organism>
<evidence type="ECO:0000255" key="1">
    <source>
        <dbReference type="HAMAP-Rule" id="MF_01220"/>
    </source>
</evidence>
<proteinExistence type="inferred from homology"/>
<comment type="function">
    <text evidence="1">Catalyzes the reversible phosphorylation of UMP to UDP.</text>
</comment>
<comment type="catalytic activity">
    <reaction evidence="1">
        <text>UMP + ATP = UDP + ADP</text>
        <dbReference type="Rhea" id="RHEA:24400"/>
        <dbReference type="ChEBI" id="CHEBI:30616"/>
        <dbReference type="ChEBI" id="CHEBI:57865"/>
        <dbReference type="ChEBI" id="CHEBI:58223"/>
        <dbReference type="ChEBI" id="CHEBI:456216"/>
        <dbReference type="EC" id="2.7.4.22"/>
    </reaction>
</comment>
<comment type="activity regulation">
    <text evidence="1">Inhibited by UTP.</text>
</comment>
<comment type="pathway">
    <text evidence="1">Pyrimidine metabolism; CTP biosynthesis via de novo pathway; UDP from UMP (UMPK route): step 1/1.</text>
</comment>
<comment type="subunit">
    <text evidence="1">Homohexamer.</text>
</comment>
<comment type="subcellular location">
    <subcellularLocation>
        <location evidence="1">Cytoplasm</location>
    </subcellularLocation>
</comment>
<comment type="similarity">
    <text evidence="1">Belongs to the UMP kinase family.</text>
</comment>
<reference key="1">
    <citation type="submission" date="2007-06" db="EMBL/GenBank/DDBJ databases">
        <title>Complete sequence of Methanococcus maripaludis C7.</title>
        <authorList>
            <consortium name="US DOE Joint Genome Institute"/>
            <person name="Copeland A."/>
            <person name="Lucas S."/>
            <person name="Lapidus A."/>
            <person name="Barry K."/>
            <person name="Glavina del Rio T."/>
            <person name="Dalin E."/>
            <person name="Tice H."/>
            <person name="Pitluck S."/>
            <person name="Clum A."/>
            <person name="Schmutz J."/>
            <person name="Larimer F."/>
            <person name="Land M."/>
            <person name="Hauser L."/>
            <person name="Kyrpides N."/>
            <person name="Anderson I."/>
            <person name="Sieprawska-Lupa M."/>
            <person name="Whitman W.B."/>
            <person name="Richardson P."/>
        </authorList>
    </citation>
    <scope>NUCLEOTIDE SEQUENCE [LARGE SCALE GENOMIC DNA]</scope>
    <source>
        <strain>C7 / ATCC BAA-1331</strain>
    </source>
</reference>
<gene>
    <name evidence="1" type="primary">pyrH</name>
    <name type="ordered locus">MmarC7_1383</name>
</gene>
<accession>A6VJ20</accession>
<feature type="chain" id="PRO_1000053954" description="Uridylate kinase">
    <location>
        <begin position="1"/>
        <end position="225"/>
    </location>
</feature>
<feature type="binding site" evidence="1">
    <location>
        <begin position="9"/>
        <end position="10"/>
    </location>
    <ligand>
        <name>ATP</name>
        <dbReference type="ChEBI" id="CHEBI:30616"/>
    </ligand>
</feature>
<feature type="binding site" evidence="1">
    <location>
        <position position="46"/>
    </location>
    <ligand>
        <name>UMP</name>
        <dbReference type="ChEBI" id="CHEBI:57865"/>
    </ligand>
</feature>
<feature type="binding site" evidence="1">
    <location>
        <position position="47"/>
    </location>
    <ligand>
        <name>ATP</name>
        <dbReference type="ChEBI" id="CHEBI:30616"/>
    </ligand>
</feature>
<feature type="binding site" evidence="1">
    <location>
        <position position="51"/>
    </location>
    <ligand>
        <name>ATP</name>
        <dbReference type="ChEBI" id="CHEBI:30616"/>
    </ligand>
</feature>
<feature type="binding site" evidence="1">
    <location>
        <position position="67"/>
    </location>
    <ligand>
        <name>UMP</name>
        <dbReference type="ChEBI" id="CHEBI:57865"/>
    </ligand>
</feature>
<feature type="binding site" evidence="1">
    <location>
        <begin position="115"/>
        <end position="121"/>
    </location>
    <ligand>
        <name>UMP</name>
        <dbReference type="ChEBI" id="CHEBI:57865"/>
    </ligand>
</feature>
<feature type="binding site" evidence="1">
    <location>
        <position position="141"/>
    </location>
    <ligand>
        <name>ATP</name>
        <dbReference type="ChEBI" id="CHEBI:30616"/>
    </ligand>
</feature>
<feature type="binding site" evidence="1">
    <location>
        <position position="142"/>
    </location>
    <ligand>
        <name>ATP</name>
        <dbReference type="ChEBI" id="CHEBI:30616"/>
    </ligand>
</feature>
<feature type="binding site" evidence="1">
    <location>
        <position position="147"/>
    </location>
    <ligand>
        <name>ATP</name>
        <dbReference type="ChEBI" id="CHEBI:30616"/>
    </ligand>
</feature>
<feature type="binding site" evidence="1">
    <location>
        <position position="150"/>
    </location>
    <ligand>
        <name>ATP</name>
        <dbReference type="ChEBI" id="CHEBI:30616"/>
    </ligand>
</feature>